<gene>
    <name evidence="4" type="ORF">CBG21207</name>
</gene>
<evidence type="ECO:0000250" key="1"/>
<evidence type="ECO:0000256" key="2">
    <source>
        <dbReference type="SAM" id="MobiDB-lite"/>
    </source>
</evidence>
<evidence type="ECO:0000305" key="3"/>
<evidence type="ECO:0000312" key="4">
    <source>
        <dbReference type="WormBase" id="CBG21207"/>
    </source>
</evidence>
<comment type="function">
    <text evidence="1">Regulates ATP-dependent protein translocation into the mitochondrial matrix.</text>
</comment>
<comment type="subunit">
    <text evidence="1">Probable component of the PAM complex at least composed of a mitochondrial HSP70 protein, GrpE, tim-44, tim-16 and tim-14. Associates with the TIM23 complex.</text>
</comment>
<comment type="subcellular location">
    <subcellularLocation>
        <location evidence="1">Mitochondrion inner membrane</location>
        <topology evidence="1">Peripheral membrane protein</topology>
        <orientation evidence="1">Matrix side</orientation>
    </subcellularLocation>
</comment>
<comment type="domain">
    <text evidence="1">The J-like region, although related to the J domain does not have co-chaperone activity.</text>
</comment>
<comment type="similarity">
    <text evidence="3">Belongs to the TIM16/PAM16 family.</text>
</comment>
<dbReference type="EMBL" id="HE600921">
    <property type="protein sequence ID" value="CAP38014.3"/>
    <property type="molecule type" value="Genomic_DNA"/>
</dbReference>
<dbReference type="RefSeq" id="XP_002642811.1">
    <property type="nucleotide sequence ID" value="XM_002642765.1"/>
</dbReference>
<dbReference type="SMR" id="Q60RS2"/>
<dbReference type="FunCoup" id="Q60RS2">
    <property type="interactions" value="274"/>
</dbReference>
<dbReference type="STRING" id="6238.Q60RS2"/>
<dbReference type="EnsemblMetazoa" id="CBG21207.1">
    <property type="protein sequence ID" value="CBG21207.1"/>
    <property type="gene ID" value="WBGene00040050"/>
</dbReference>
<dbReference type="GeneID" id="8584805"/>
<dbReference type="KEGG" id="cbr:CBG_21207"/>
<dbReference type="CTD" id="8584805"/>
<dbReference type="WormBase" id="CBG21207">
    <property type="protein sequence ID" value="CBP11703"/>
    <property type="gene ID" value="WBGene00040050"/>
</dbReference>
<dbReference type="eggNOG" id="KOG3442">
    <property type="taxonomic scope" value="Eukaryota"/>
</dbReference>
<dbReference type="HOGENOM" id="CLU_101461_3_0_1"/>
<dbReference type="InParanoid" id="Q60RS2"/>
<dbReference type="OMA" id="EHLFAIN"/>
<dbReference type="OrthoDB" id="10262892at2759"/>
<dbReference type="Proteomes" id="UP000008549">
    <property type="component" value="Unassembled WGS sequence"/>
</dbReference>
<dbReference type="GO" id="GO:0005744">
    <property type="term" value="C:TIM23 mitochondrial import inner membrane translocase complex"/>
    <property type="evidence" value="ECO:0000318"/>
    <property type="project" value="GO_Central"/>
</dbReference>
<dbReference type="GO" id="GO:0030150">
    <property type="term" value="P:protein import into mitochondrial matrix"/>
    <property type="evidence" value="ECO:0000318"/>
    <property type="project" value="GO_Central"/>
</dbReference>
<dbReference type="FunFam" id="1.10.287.110:FF:000006">
    <property type="entry name" value="Import inner membrane translocase subunit TIM16"/>
    <property type="match status" value="1"/>
</dbReference>
<dbReference type="Gene3D" id="1.10.287.110">
    <property type="entry name" value="DnaJ domain"/>
    <property type="match status" value="1"/>
</dbReference>
<dbReference type="InterPro" id="IPR036869">
    <property type="entry name" value="J_dom_sf"/>
</dbReference>
<dbReference type="InterPro" id="IPR005341">
    <property type="entry name" value="Tim16"/>
</dbReference>
<dbReference type="PANTHER" id="PTHR12388">
    <property type="entry name" value="MITOCHONDRIA ASSOCIATED GRANULOCYTE MACROPHAGE CSF SIGNALING MOLECULE"/>
    <property type="match status" value="1"/>
</dbReference>
<dbReference type="PANTHER" id="PTHR12388:SF0">
    <property type="entry name" value="MITOCHONDRIAL IMPORT INNER MEMBRANE TRANSLOCASE SUBUNIT TIM16"/>
    <property type="match status" value="1"/>
</dbReference>
<dbReference type="Pfam" id="PF03656">
    <property type="entry name" value="Pam16"/>
    <property type="match status" value="1"/>
</dbReference>
<keyword id="KW-0472">Membrane</keyword>
<keyword id="KW-0496">Mitochondrion</keyword>
<keyword id="KW-0999">Mitochondrion inner membrane</keyword>
<keyword id="KW-0653">Protein transport</keyword>
<keyword id="KW-1185">Reference proteome</keyword>
<keyword id="KW-0811">Translocation</keyword>
<keyword id="KW-0813">Transport</keyword>
<organism>
    <name type="scientific">Caenorhabditis briggsae</name>
    <dbReference type="NCBI Taxonomy" id="6238"/>
    <lineage>
        <taxon>Eukaryota</taxon>
        <taxon>Metazoa</taxon>
        <taxon>Ecdysozoa</taxon>
        <taxon>Nematoda</taxon>
        <taxon>Chromadorea</taxon>
        <taxon>Rhabditida</taxon>
        <taxon>Rhabditina</taxon>
        <taxon>Rhabditomorpha</taxon>
        <taxon>Rhabditoidea</taxon>
        <taxon>Rhabditidae</taxon>
        <taxon>Peloderinae</taxon>
        <taxon>Caenorhabditis</taxon>
    </lineage>
</organism>
<reference key="1">
    <citation type="journal article" date="2003" name="PLoS Biol.">
        <title>The genome sequence of Caenorhabditis briggsae: a platform for comparative genomics.</title>
        <authorList>
            <person name="Stein L.D."/>
            <person name="Bao Z."/>
            <person name="Blasiar D."/>
            <person name="Blumenthal T."/>
            <person name="Brent M.R."/>
            <person name="Chen N."/>
            <person name="Chinwalla A."/>
            <person name="Clarke L."/>
            <person name="Clee C."/>
            <person name="Coghlan A."/>
            <person name="Coulson A."/>
            <person name="D'Eustachio P."/>
            <person name="Fitch D.H.A."/>
            <person name="Fulton L.A."/>
            <person name="Fulton R.E."/>
            <person name="Griffiths-Jones S."/>
            <person name="Harris T.W."/>
            <person name="Hillier L.W."/>
            <person name="Kamath R."/>
            <person name="Kuwabara P.E."/>
            <person name="Mardis E.R."/>
            <person name="Marra M.A."/>
            <person name="Miner T.L."/>
            <person name="Minx P."/>
            <person name="Mullikin J.C."/>
            <person name="Plumb R.W."/>
            <person name="Rogers J."/>
            <person name="Schein J.E."/>
            <person name="Sohrmann M."/>
            <person name="Spieth J."/>
            <person name="Stajich J.E."/>
            <person name="Wei C."/>
            <person name="Willey D."/>
            <person name="Wilson R.K."/>
            <person name="Durbin R.M."/>
            <person name="Waterston R.H."/>
        </authorList>
    </citation>
    <scope>NUCLEOTIDE SEQUENCE [LARGE SCALE GENOMIC DNA]</scope>
    <source>
        <strain>AF16</strain>
    </source>
</reference>
<feature type="chain" id="PRO_0000214085" description="Mitochondrial import inner membrane translocase subunit tim-16">
    <location>
        <begin position="1"/>
        <end position="138"/>
    </location>
</feature>
<feature type="region of interest" description="Disordered" evidence="2">
    <location>
        <begin position="32"/>
        <end position="58"/>
    </location>
</feature>
<feature type="region of interest" description="J-like">
    <location>
        <begin position="66"/>
        <end position="119"/>
    </location>
</feature>
<feature type="region of interest" description="Disordered" evidence="2">
    <location>
        <begin position="118"/>
        <end position="138"/>
    </location>
</feature>
<feature type="compositionally biased region" description="Low complexity" evidence="2">
    <location>
        <begin position="32"/>
        <end position="43"/>
    </location>
</feature>
<feature type="compositionally biased region" description="Polar residues" evidence="2">
    <location>
        <begin position="44"/>
        <end position="56"/>
    </location>
</feature>
<sequence length="138" mass="15532">MPWRTALKVALAAGEAVTKALTRAVRDEIRQTQQAAARHAAATGQSPSETKENANANAKLGISLEESLQILNVKTPLNREDVEKHYEHLFAINDKAKGGTFYLQSKVYRAKERIDEELSRLEQKSEENKEQQKENSKE</sequence>
<proteinExistence type="inferred from homology"/>
<protein>
    <recommendedName>
        <fullName>Mitochondrial import inner membrane translocase subunit tim-16</fullName>
    </recommendedName>
</protein>
<name>TIM16_CAEBR</name>
<accession>Q60RS2</accession>
<accession>A8XZL5</accession>